<comment type="function">
    <text evidence="1">Functions as a two-component phosphorelay mediator between cytokinin sensor histidine kinases and response regulators (B-type ARRs). Plays an important role in propagating cytokinin signal transduction.</text>
</comment>
<comment type="disruption phenotype">
    <text evidence="3">Dwarf, narrow leaf, low fertility and small grain phenotypes.</text>
</comment>
<comment type="caution">
    <text evidence="6">Lacks the conserved active histidine at position 79 that mediates the phosphotransfer. Shows a conserved HPt domain that may have some alternative degenerated phosphorelay role in cell signaling.</text>
</comment>
<comment type="sequence caution" evidence="6">
    <conflict type="erroneous gene model prediction">
        <sequence resource="EMBL-CDS" id="BAF16745"/>
    </conflict>
</comment>
<feature type="chain" id="PRO_0000433814" description="Pseudo histidine-containing phosphotransfer protein 2">
    <location>
        <begin position="1"/>
        <end position="151"/>
    </location>
</feature>
<feature type="domain" description="HPt" evidence="2">
    <location>
        <begin position="38"/>
        <end position="133"/>
    </location>
</feature>
<proteinExistence type="evidence at transcript level"/>
<accession>Q0DK78</accession>
<accession>A0A0P0WJ02</accession>
<accession>B7F8C5</accession>
<gene>
    <name evidence="5" type="primary">PHP2</name>
    <name evidence="7" type="ordered locus">Os05g0186100</name>
    <name evidence="6" type="ordered locus">LOC_Os05g09410</name>
</gene>
<protein>
    <recommendedName>
        <fullName evidence="5">Pseudo histidine-containing phosphotransfer protein 2</fullName>
    </recommendedName>
    <alternativeName>
        <fullName evidence="4">OsHpt4</fullName>
    </alternativeName>
</protein>
<keyword id="KW-0932">Cytokinin signaling pathway</keyword>
<keyword id="KW-1185">Reference proteome</keyword>
<keyword id="KW-0902">Two-component regulatory system</keyword>
<dbReference type="EMBL" id="AP008211">
    <property type="protein sequence ID" value="BAF16745.2"/>
    <property type="status" value="ALT_SEQ"/>
    <property type="molecule type" value="Genomic_DNA"/>
</dbReference>
<dbReference type="EMBL" id="AP014961">
    <property type="protein sequence ID" value="BAS92604.1"/>
    <property type="molecule type" value="Genomic_DNA"/>
</dbReference>
<dbReference type="EMBL" id="AK240821">
    <property type="protein sequence ID" value="BAH00873.1"/>
    <property type="molecule type" value="mRNA"/>
</dbReference>
<dbReference type="RefSeq" id="XP_015637666.1">
    <property type="nucleotide sequence ID" value="XM_015782180.1"/>
</dbReference>
<dbReference type="RefSeq" id="XP_015637667.1">
    <property type="nucleotide sequence ID" value="XM_015782181.1"/>
</dbReference>
<dbReference type="SMR" id="Q0DK78"/>
<dbReference type="FunCoup" id="Q0DK78">
    <property type="interactions" value="14"/>
</dbReference>
<dbReference type="STRING" id="39947.Q0DK78"/>
<dbReference type="PaxDb" id="39947-Q0DK78"/>
<dbReference type="EnsemblPlants" id="Os05t0186100-01">
    <property type="protein sequence ID" value="Os05t0186100-01"/>
    <property type="gene ID" value="Os05g0186100"/>
</dbReference>
<dbReference type="Gramene" id="Os05t0186100-01">
    <property type="protein sequence ID" value="Os05t0186100-01"/>
    <property type="gene ID" value="Os05g0186100"/>
</dbReference>
<dbReference type="KEGG" id="dosa:Os05g0186100"/>
<dbReference type="eggNOG" id="KOG4747">
    <property type="taxonomic scope" value="Eukaryota"/>
</dbReference>
<dbReference type="InParanoid" id="Q0DK78"/>
<dbReference type="OMA" id="CDGRNLE"/>
<dbReference type="OrthoDB" id="1673781at2759"/>
<dbReference type="Proteomes" id="UP000000763">
    <property type="component" value="Chromosome 5"/>
</dbReference>
<dbReference type="Proteomes" id="UP000059680">
    <property type="component" value="Chromosome 5"/>
</dbReference>
<dbReference type="GO" id="GO:0005737">
    <property type="term" value="C:cytoplasm"/>
    <property type="evidence" value="ECO:0000318"/>
    <property type="project" value="GO_Central"/>
</dbReference>
<dbReference type="GO" id="GO:0005634">
    <property type="term" value="C:nucleus"/>
    <property type="evidence" value="ECO:0000318"/>
    <property type="project" value="GO_Central"/>
</dbReference>
<dbReference type="GO" id="GO:0009927">
    <property type="term" value="F:histidine phosphotransfer kinase activity"/>
    <property type="evidence" value="ECO:0000318"/>
    <property type="project" value="GO_Central"/>
</dbReference>
<dbReference type="GO" id="GO:0043424">
    <property type="term" value="F:protein histidine kinase binding"/>
    <property type="evidence" value="ECO:0000318"/>
    <property type="project" value="GO_Central"/>
</dbReference>
<dbReference type="GO" id="GO:0009736">
    <property type="term" value="P:cytokinin-activated signaling pathway"/>
    <property type="evidence" value="ECO:0000318"/>
    <property type="project" value="GO_Central"/>
</dbReference>
<dbReference type="GO" id="GO:0000160">
    <property type="term" value="P:phosphorelay signal transduction system"/>
    <property type="evidence" value="ECO:0000318"/>
    <property type="project" value="GO_Central"/>
</dbReference>
<dbReference type="FunFam" id="1.20.120.160:FF:000005">
    <property type="entry name" value="Histidine-containing phosphotransfer protein 4"/>
    <property type="match status" value="1"/>
</dbReference>
<dbReference type="Gene3D" id="1.20.120.160">
    <property type="entry name" value="HPT domain"/>
    <property type="match status" value="1"/>
</dbReference>
<dbReference type="InterPro" id="IPR045871">
    <property type="entry name" value="AHP1-5/YPD1"/>
</dbReference>
<dbReference type="InterPro" id="IPR036641">
    <property type="entry name" value="HPT_dom_sf"/>
</dbReference>
<dbReference type="InterPro" id="IPR008207">
    <property type="entry name" value="Sig_transdc_His_kin_Hpt_dom"/>
</dbReference>
<dbReference type="PANTHER" id="PTHR28242:SF43">
    <property type="entry name" value="HISTIDINE-CONTAINING PHOSPHOTRANSFER PROTEIN 4"/>
    <property type="match status" value="1"/>
</dbReference>
<dbReference type="PANTHER" id="PTHR28242">
    <property type="entry name" value="PHOSPHORELAY INTERMEDIATE PROTEIN YPD1"/>
    <property type="match status" value="1"/>
</dbReference>
<dbReference type="Pfam" id="PF01627">
    <property type="entry name" value="Hpt"/>
    <property type="match status" value="1"/>
</dbReference>
<dbReference type="SUPFAM" id="SSF47226">
    <property type="entry name" value="Histidine-containing phosphotransfer domain, HPT domain"/>
    <property type="match status" value="1"/>
</dbReference>
<dbReference type="PROSITE" id="PS50894">
    <property type="entry name" value="HPT"/>
    <property type="match status" value="1"/>
</dbReference>
<name>PHP2_ORYSJ</name>
<reference key="1">
    <citation type="journal article" date="2005" name="Nature">
        <title>The map-based sequence of the rice genome.</title>
        <authorList>
            <consortium name="International rice genome sequencing project (IRGSP)"/>
        </authorList>
    </citation>
    <scope>NUCLEOTIDE SEQUENCE [LARGE SCALE GENOMIC DNA]</scope>
    <source>
        <strain>cv. Nipponbare</strain>
    </source>
</reference>
<reference key="2">
    <citation type="journal article" date="2008" name="Nucleic Acids Res.">
        <title>The rice annotation project database (RAP-DB): 2008 update.</title>
        <authorList>
            <consortium name="The rice annotation project (RAP)"/>
        </authorList>
    </citation>
    <scope>GENOME REANNOTATION</scope>
    <source>
        <strain>cv. Nipponbare</strain>
    </source>
</reference>
<reference key="3">
    <citation type="journal article" date="2013" name="Rice">
        <title>Improvement of the Oryza sativa Nipponbare reference genome using next generation sequence and optical map data.</title>
        <authorList>
            <person name="Kawahara Y."/>
            <person name="de la Bastide M."/>
            <person name="Hamilton J.P."/>
            <person name="Kanamori H."/>
            <person name="McCombie W.R."/>
            <person name="Ouyang S."/>
            <person name="Schwartz D.C."/>
            <person name="Tanaka T."/>
            <person name="Wu J."/>
            <person name="Zhou S."/>
            <person name="Childs K.L."/>
            <person name="Davidson R.M."/>
            <person name="Lin H."/>
            <person name="Quesada-Ocampo L."/>
            <person name="Vaillancourt B."/>
            <person name="Sakai H."/>
            <person name="Lee S.S."/>
            <person name="Kim J."/>
            <person name="Numa H."/>
            <person name="Itoh T."/>
            <person name="Buell C.R."/>
            <person name="Matsumoto T."/>
        </authorList>
    </citation>
    <scope>GENOME REANNOTATION</scope>
    <source>
        <strain>cv. Nipponbare</strain>
    </source>
</reference>
<reference key="4">
    <citation type="submission" date="2006-10" db="EMBL/GenBank/DDBJ databases">
        <title>Oryza sativa full length cDNA.</title>
        <authorList>
            <consortium name="The rice full-length cDNA consortium"/>
        </authorList>
    </citation>
    <scope>NUCLEOTIDE SEQUENCE [LARGE SCALE MRNA]</scope>
    <source>
        <strain>cv. Nipponbare</strain>
    </source>
</reference>
<reference key="5">
    <citation type="journal article" date="2006" name="Plant Physiol.">
        <title>Whole-genome analysis of Oryza sativa reveals similar architecture of two-component signaling machinery with Arabidopsis.</title>
        <authorList>
            <person name="Pareek A."/>
            <person name="Singh A."/>
            <person name="Kumar M."/>
            <person name="Kushwaha H.R."/>
            <person name="Lynn A.M."/>
            <person name="Singla-Pareek S.L."/>
        </authorList>
    </citation>
    <scope>DISRUPTION PHENOTYPE</scope>
</reference>
<reference key="6">
    <citation type="journal article" date="2007" name="Plant Physiol.">
        <title>Nomenclature for two-component signaling elements of rice.</title>
        <authorList>
            <person name="Schaller G.E."/>
            <person name="Doi K."/>
            <person name="Hwang I."/>
            <person name="Kieber J.J."/>
            <person name="Khurana J.P."/>
            <person name="Kurata N."/>
            <person name="Mizuno T."/>
            <person name="Pareek A."/>
            <person name="Shiu S.H."/>
            <person name="Wu P."/>
            <person name="Yip W.K."/>
        </authorList>
    </citation>
    <scope>GENE FAMILY</scope>
    <scope>NOMENCLATURE</scope>
</reference>
<organism>
    <name type="scientific">Oryza sativa subsp. japonica</name>
    <name type="common">Rice</name>
    <dbReference type="NCBI Taxonomy" id="39947"/>
    <lineage>
        <taxon>Eukaryota</taxon>
        <taxon>Viridiplantae</taxon>
        <taxon>Streptophyta</taxon>
        <taxon>Embryophyta</taxon>
        <taxon>Tracheophyta</taxon>
        <taxon>Spermatophyta</taxon>
        <taxon>Magnoliopsida</taxon>
        <taxon>Liliopsida</taxon>
        <taxon>Poales</taxon>
        <taxon>Poaceae</taxon>
        <taxon>BOP clade</taxon>
        <taxon>Oryzoideae</taxon>
        <taxon>Oryzeae</taxon>
        <taxon>Oryzinae</taxon>
        <taxon>Oryza</taxon>
        <taxon>Oryza sativa</taxon>
    </lineage>
</organism>
<evidence type="ECO:0000250" key="1">
    <source>
        <dbReference type="UniProtKB" id="Q8L9T7"/>
    </source>
</evidence>
<evidence type="ECO:0000255" key="2">
    <source>
        <dbReference type="PROSITE-ProRule" id="PRU00110"/>
    </source>
</evidence>
<evidence type="ECO:0000269" key="3">
    <source>
    </source>
</evidence>
<evidence type="ECO:0000303" key="4">
    <source>
    </source>
</evidence>
<evidence type="ECO:0000303" key="5">
    <source>
    </source>
</evidence>
<evidence type="ECO:0000305" key="6"/>
<evidence type="ECO:0000312" key="7">
    <source>
        <dbReference type="EMBL" id="BAF16745.2"/>
    </source>
</evidence>
<sequence>MEYSNLRRQIIFMKKNLFDQGYLDEQFNQLEELQDESSPNFVEEVAALFFKDSSRLLTNIEQAIDKYPQDFYRLDSLVQQLKGSGSSIGALRMKNECSVFKVNCNDRNLEGCRRSLQKMKREHATLKQKLESYFQLLRQVGPRDYAVSSRK</sequence>